<comment type="function">
    <text evidence="6">Bifunctional terpene synthase converts DMAPP and IPP, and also GGPP, into variediene as a single product (PubMed:31476106). The C-terminal prenyltransferase domain of AbVS catalyzes formation of GGPP, whereas the N-terminal terpene cyclase domain catalyzes the cyclization of GGPP to variediene (PubMed:31476106).</text>
</comment>
<comment type="catalytic activity">
    <reaction evidence="6">
        <text>isopentenyl diphosphate + (2E,6E)-farnesyl diphosphate = (2E,6E,10E)-geranylgeranyl diphosphate + diphosphate</text>
        <dbReference type="Rhea" id="RHEA:17653"/>
        <dbReference type="ChEBI" id="CHEBI:33019"/>
        <dbReference type="ChEBI" id="CHEBI:58756"/>
        <dbReference type="ChEBI" id="CHEBI:128769"/>
        <dbReference type="ChEBI" id="CHEBI:175763"/>
        <dbReference type="EC" id="2.5.1.29"/>
    </reaction>
    <physiologicalReaction direction="left-to-right" evidence="6">
        <dbReference type="Rhea" id="RHEA:17654"/>
    </physiologicalReaction>
</comment>
<comment type="catalytic activity">
    <reaction evidence="6">
        <text>(2E,6E,10E)-geranylgeranyl diphosphate = variediene + diphosphate</text>
        <dbReference type="Rhea" id="RHEA:78287"/>
        <dbReference type="ChEBI" id="CHEBI:33019"/>
        <dbReference type="ChEBI" id="CHEBI:58756"/>
        <dbReference type="ChEBI" id="CHEBI:177888"/>
    </reaction>
    <physiologicalReaction direction="left-to-right" evidence="6">
        <dbReference type="Rhea" id="RHEA:78288"/>
    </physiologicalReaction>
</comment>
<comment type="cofactor">
    <cofactor evidence="2">
        <name>Mg(2+)</name>
        <dbReference type="ChEBI" id="CHEBI:18420"/>
    </cofactor>
</comment>
<comment type="pathway">
    <text evidence="6">Secondary metabolite biosynthesis; terpenoid biosynthesis.</text>
</comment>
<comment type="subunit">
    <text evidence="1">Hexamer.</text>
</comment>
<comment type="domain">
    <text evidence="9">The conserved DDXXD motifs as well as the NSE/DTE motif are important for the catalytic activity, presumably through binding to Mg(2+).</text>
</comment>
<comment type="similarity">
    <text evidence="8">In the N-terminal section; belongs to the terpene synthase family.</text>
</comment>
<comment type="similarity">
    <text evidence="8">In the C-terminal section; belongs to the FPP/GGPP synthase family.</text>
</comment>
<name>ABVS_ASPBC</name>
<feature type="chain" id="PRO_0000453636" description="Variediene synthase">
    <location>
        <begin position="1"/>
        <end position="695"/>
    </location>
</feature>
<feature type="region of interest" description="Disordered" evidence="5">
    <location>
        <begin position="1"/>
        <end position="23"/>
    </location>
</feature>
<feature type="region of interest" description="Terpene cyclase" evidence="9">
    <location>
        <begin position="7"/>
        <end position="332"/>
    </location>
</feature>
<feature type="region of interest" description="Disordered" evidence="5">
    <location>
        <begin position="353"/>
        <end position="392"/>
    </location>
</feature>
<feature type="short sequence motif" description="DDXXD 1" evidence="9">
    <location>
        <begin position="98"/>
        <end position="102"/>
    </location>
</feature>
<feature type="short sequence motif" description="NSE/DTE" evidence="9">
    <location>
        <begin position="228"/>
        <end position="236"/>
    </location>
</feature>
<feature type="short sequence motif" description="DDXXD 2" evidence="9">
    <location>
        <begin position="454"/>
        <end position="458"/>
    </location>
</feature>
<feature type="compositionally biased region" description="Low complexity" evidence="5">
    <location>
        <begin position="357"/>
        <end position="385"/>
    </location>
</feature>
<feature type="binding site" evidence="4">
    <location>
        <position position="98"/>
    </location>
    <ligand>
        <name>Mg(2+)</name>
        <dbReference type="ChEBI" id="CHEBI:18420"/>
        <label>1</label>
    </ligand>
</feature>
<feature type="binding site" evidence="4">
    <location>
        <position position="98"/>
    </location>
    <ligand>
        <name>Mg(2+)</name>
        <dbReference type="ChEBI" id="CHEBI:18420"/>
        <label>2</label>
    </ligand>
</feature>
<feature type="binding site" evidence="1">
    <location>
        <position position="98"/>
    </location>
    <ligand>
        <name>substrate</name>
    </ligand>
</feature>
<feature type="binding site" evidence="1">
    <location>
        <begin position="184"/>
        <end position="187"/>
    </location>
    <ligand>
        <name>substrate</name>
    </ligand>
</feature>
<feature type="binding site" evidence="1">
    <location>
        <position position="228"/>
    </location>
    <ligand>
        <name>substrate</name>
    </ligand>
</feature>
<feature type="binding site" evidence="1">
    <location>
        <begin position="232"/>
        <end position="236"/>
    </location>
    <ligand>
        <name>substrate</name>
    </ligand>
</feature>
<feature type="binding site" evidence="9">
    <location>
        <begin position="324"/>
        <end position="325"/>
    </location>
    <ligand>
        <name>substrate</name>
    </ligand>
</feature>
<feature type="binding site" evidence="3">
    <location>
        <position position="415"/>
    </location>
    <ligand>
        <name>isopentenyl diphosphate</name>
        <dbReference type="ChEBI" id="CHEBI:128769"/>
    </ligand>
</feature>
<feature type="binding site" evidence="3">
    <location>
        <position position="418"/>
    </location>
    <ligand>
        <name>isopentenyl diphosphate</name>
        <dbReference type="ChEBI" id="CHEBI:128769"/>
    </ligand>
</feature>
<feature type="binding site" evidence="3">
    <location>
        <position position="447"/>
    </location>
    <ligand>
        <name>isopentenyl diphosphate</name>
        <dbReference type="ChEBI" id="CHEBI:128769"/>
    </ligand>
</feature>
<feature type="binding site" evidence="3">
    <location>
        <position position="454"/>
    </location>
    <ligand>
        <name>Mg(2+)</name>
        <dbReference type="ChEBI" id="CHEBI:18420"/>
        <label>3</label>
    </ligand>
</feature>
<feature type="binding site" evidence="3">
    <location>
        <position position="454"/>
    </location>
    <ligand>
        <name>Mg(2+)</name>
        <dbReference type="ChEBI" id="CHEBI:18420"/>
        <label>4</label>
    </ligand>
</feature>
<feature type="binding site" evidence="3">
    <location>
        <position position="458"/>
    </location>
    <ligand>
        <name>Mg(2+)</name>
        <dbReference type="ChEBI" id="CHEBI:18420"/>
        <label>3</label>
    </ligand>
</feature>
<feature type="binding site" evidence="3">
    <location>
        <position position="458"/>
    </location>
    <ligand>
        <name>Mg(2+)</name>
        <dbReference type="ChEBI" id="CHEBI:18420"/>
        <label>4</label>
    </ligand>
</feature>
<feature type="binding site" evidence="3">
    <location>
        <position position="463"/>
    </location>
    <ligand>
        <name>dimethylallyl diphosphate</name>
        <dbReference type="ChEBI" id="CHEBI:57623"/>
    </ligand>
</feature>
<feature type="binding site" evidence="3">
    <location>
        <position position="464"/>
    </location>
    <ligand>
        <name>isopentenyl diphosphate</name>
        <dbReference type="ChEBI" id="CHEBI:128769"/>
    </ligand>
</feature>
<feature type="binding site" evidence="3">
    <location>
        <position position="541"/>
    </location>
    <ligand>
        <name>dimethylallyl diphosphate</name>
        <dbReference type="ChEBI" id="CHEBI:57623"/>
    </ligand>
</feature>
<feature type="binding site" evidence="3">
    <location>
        <position position="542"/>
    </location>
    <ligand>
        <name>dimethylallyl diphosphate</name>
        <dbReference type="ChEBI" id="CHEBI:57623"/>
    </ligand>
</feature>
<feature type="binding site" evidence="3">
    <location>
        <position position="579"/>
    </location>
    <ligand>
        <name>dimethylallyl diphosphate</name>
        <dbReference type="ChEBI" id="CHEBI:57623"/>
    </ligand>
</feature>
<feature type="binding site" evidence="3">
    <location>
        <position position="586"/>
    </location>
    <ligand>
        <name>dimethylallyl diphosphate</name>
        <dbReference type="ChEBI" id="CHEBI:57623"/>
    </ligand>
</feature>
<feature type="binding site" evidence="3">
    <location>
        <position position="595"/>
    </location>
    <ligand>
        <name>dimethylallyl diphosphate</name>
        <dbReference type="ChEBI" id="CHEBI:57623"/>
    </ligand>
</feature>
<feature type="binding site" evidence="3">
    <location>
        <position position="605"/>
    </location>
    <ligand>
        <name>dimethylallyl diphosphate</name>
        <dbReference type="ChEBI" id="CHEBI:57623"/>
    </ligand>
</feature>
<accession>A0A1L9UKS1</accession>
<organism>
    <name type="scientific">Aspergillus brasiliensis (strain CBS 101740 / IMI 381727 / IBT 21946)</name>
    <dbReference type="NCBI Taxonomy" id="767769"/>
    <lineage>
        <taxon>Eukaryota</taxon>
        <taxon>Fungi</taxon>
        <taxon>Dikarya</taxon>
        <taxon>Ascomycota</taxon>
        <taxon>Pezizomycotina</taxon>
        <taxon>Eurotiomycetes</taxon>
        <taxon>Eurotiomycetidae</taxon>
        <taxon>Eurotiales</taxon>
        <taxon>Aspergillaceae</taxon>
        <taxon>Aspergillus</taxon>
        <taxon>Aspergillus subgen. Circumdati</taxon>
    </lineage>
</organism>
<evidence type="ECO:0000250" key="1">
    <source>
        <dbReference type="UniProtKB" id="A2PZA5"/>
    </source>
</evidence>
<evidence type="ECO:0000250" key="2">
    <source>
        <dbReference type="UniProtKB" id="P9WEV7"/>
    </source>
</evidence>
<evidence type="ECO:0000250" key="3">
    <source>
        <dbReference type="UniProtKB" id="Q12051"/>
    </source>
</evidence>
<evidence type="ECO:0000250" key="4">
    <source>
        <dbReference type="UniProtKB" id="Q40577"/>
    </source>
</evidence>
<evidence type="ECO:0000256" key="5">
    <source>
        <dbReference type="SAM" id="MobiDB-lite"/>
    </source>
</evidence>
<evidence type="ECO:0000269" key="6">
    <source>
    </source>
</evidence>
<evidence type="ECO:0000303" key="7">
    <source>
    </source>
</evidence>
<evidence type="ECO:0000305" key="8"/>
<evidence type="ECO:0000305" key="9">
    <source>
    </source>
</evidence>
<proteinExistence type="evidence at protein level"/>
<reference key="1">
    <citation type="journal article" date="2017" name="Genome Biol.">
        <title>Comparative genomics reveals high biological diversity and specific adaptations in the industrially and medically important fungal genus Aspergillus.</title>
        <authorList>
            <person name="de Vries R.P."/>
            <person name="Riley R."/>
            <person name="Wiebenga A."/>
            <person name="Aguilar-Osorio G."/>
            <person name="Amillis S."/>
            <person name="Uchima C.A."/>
            <person name="Anderluh G."/>
            <person name="Asadollahi M."/>
            <person name="Askin M."/>
            <person name="Barry K."/>
            <person name="Battaglia E."/>
            <person name="Bayram O."/>
            <person name="Benocci T."/>
            <person name="Braus-Stromeyer S.A."/>
            <person name="Caldana C."/>
            <person name="Canovas D."/>
            <person name="Cerqueira G.C."/>
            <person name="Chen F."/>
            <person name="Chen W."/>
            <person name="Choi C."/>
            <person name="Clum A."/>
            <person name="Dos Santos R.A."/>
            <person name="Damasio A.R."/>
            <person name="Diallinas G."/>
            <person name="Emri T."/>
            <person name="Fekete E."/>
            <person name="Flipphi M."/>
            <person name="Freyberg S."/>
            <person name="Gallo A."/>
            <person name="Gournas C."/>
            <person name="Habgood R."/>
            <person name="Hainaut M."/>
            <person name="Harispe M.L."/>
            <person name="Henrissat B."/>
            <person name="Hilden K.S."/>
            <person name="Hope R."/>
            <person name="Hossain A."/>
            <person name="Karabika E."/>
            <person name="Karaffa L."/>
            <person name="Karanyi Z."/>
            <person name="Krasevec N."/>
            <person name="Kuo A."/>
            <person name="Kusch H."/>
            <person name="LaButti K."/>
            <person name="Lagendijk E.L."/>
            <person name="Lapidus A."/>
            <person name="Levasseur A."/>
            <person name="Lindquist E."/>
            <person name="Lipzen A."/>
            <person name="Logrieco A.F."/>
            <person name="MacCabe A."/>
            <person name="Maekelae M.R."/>
            <person name="Malavazi I."/>
            <person name="Melin P."/>
            <person name="Meyer V."/>
            <person name="Mielnichuk N."/>
            <person name="Miskei M."/>
            <person name="Molnar A.P."/>
            <person name="Mule G."/>
            <person name="Ngan C.Y."/>
            <person name="Orejas M."/>
            <person name="Orosz E."/>
            <person name="Ouedraogo J.P."/>
            <person name="Overkamp K.M."/>
            <person name="Park H.-S."/>
            <person name="Perrone G."/>
            <person name="Piumi F."/>
            <person name="Punt P.J."/>
            <person name="Ram A.F."/>
            <person name="Ramon A."/>
            <person name="Rauscher S."/>
            <person name="Record E."/>
            <person name="Riano-Pachon D.M."/>
            <person name="Robert V."/>
            <person name="Roehrig J."/>
            <person name="Ruller R."/>
            <person name="Salamov A."/>
            <person name="Salih N.S."/>
            <person name="Samson R.A."/>
            <person name="Sandor E."/>
            <person name="Sanguinetti M."/>
            <person name="Schuetze T."/>
            <person name="Sepcic K."/>
            <person name="Shelest E."/>
            <person name="Sherlock G."/>
            <person name="Sophianopoulou V."/>
            <person name="Squina F.M."/>
            <person name="Sun H."/>
            <person name="Susca A."/>
            <person name="Todd R.B."/>
            <person name="Tsang A."/>
            <person name="Unkles S.E."/>
            <person name="van de Wiele N."/>
            <person name="van Rossen-Uffink D."/>
            <person name="Oliveira J.V."/>
            <person name="Vesth T.C."/>
            <person name="Visser J."/>
            <person name="Yu J.-H."/>
            <person name="Zhou M."/>
            <person name="Andersen M.R."/>
            <person name="Archer D.B."/>
            <person name="Baker S.E."/>
            <person name="Benoit I."/>
            <person name="Brakhage A.A."/>
            <person name="Braus G.H."/>
            <person name="Fischer R."/>
            <person name="Frisvad J.C."/>
            <person name="Goldman G.H."/>
            <person name="Houbraken J."/>
            <person name="Oakley B."/>
            <person name="Pocsi I."/>
            <person name="Scazzocchio C."/>
            <person name="Seiboth B."/>
            <person name="vanKuyk P.A."/>
            <person name="Wortman J."/>
            <person name="Dyer P.S."/>
            <person name="Grigoriev I.V."/>
        </authorList>
    </citation>
    <scope>NUCLEOTIDE SEQUENCE [LARGE SCALE GENOMIC DNA]</scope>
    <source>
        <strain>CBS 101740 / IMI 381727 / IBT 21946</strain>
    </source>
</reference>
<reference key="2">
    <citation type="journal article" date="2020" name="ChemBioChem">
        <title>A family of related fungal and bacterial di- and sesterterpenes: studies on fusaterpenol and variediene.</title>
        <authorList>
            <person name="Rinkel J."/>
            <person name="Steiner S.T."/>
            <person name="Bian G."/>
            <person name="Chen R."/>
            <person name="Liu T."/>
            <person name="Dickschat J.S."/>
        </authorList>
    </citation>
    <scope>FUNCTION</scope>
    <scope>CATALYTIC ACTIVITY</scope>
    <scope>DOMAIN</scope>
    <scope>PATHWAY</scope>
</reference>
<protein>
    <recommendedName>
        <fullName evidence="7">Variediene synthase</fullName>
        <shortName evidence="7">VS</shortName>
    </recommendedName>
    <domain>
        <recommendedName>
            <fullName evidence="7">Terpene cyclase</fullName>
            <ecNumber evidence="6">4.2.3.-</ecNumber>
        </recommendedName>
    </domain>
    <domain>
        <recommendedName>
            <fullName evidence="7">Geranylgeranyl diphosphate synthase</fullName>
            <shortName evidence="7">GGDP synthase</shortName>
            <shortName evidence="7">GGS</shortName>
            <ecNumber evidence="6">2.5.1.29</ecNumber>
        </recommendedName>
    </domain>
</protein>
<dbReference type="EC" id="4.2.3.-" evidence="6"/>
<dbReference type="EC" id="2.5.1.29" evidence="6"/>
<dbReference type="EMBL" id="KV878684">
    <property type="protein sequence ID" value="OJJ72250.1"/>
    <property type="molecule type" value="Genomic_DNA"/>
</dbReference>
<dbReference type="SMR" id="A0A1L9UKS1"/>
<dbReference type="STRING" id="767769.A0A1L9UKS1"/>
<dbReference type="VEuPathDB" id="FungiDB:ASPBRDRAFT_675371"/>
<dbReference type="OMA" id="VKPCYAA"/>
<dbReference type="OrthoDB" id="6921389at2759"/>
<dbReference type="UniPathway" id="UPA00213"/>
<dbReference type="Proteomes" id="UP000184499">
    <property type="component" value="Unassembled WGS sequence"/>
</dbReference>
<dbReference type="GO" id="GO:0016829">
    <property type="term" value="F:lyase activity"/>
    <property type="evidence" value="ECO:0007669"/>
    <property type="project" value="UniProtKB-KW"/>
</dbReference>
<dbReference type="GO" id="GO:0046872">
    <property type="term" value="F:metal ion binding"/>
    <property type="evidence" value="ECO:0007669"/>
    <property type="project" value="UniProtKB-KW"/>
</dbReference>
<dbReference type="GO" id="GO:0004659">
    <property type="term" value="F:prenyltransferase activity"/>
    <property type="evidence" value="ECO:0007669"/>
    <property type="project" value="InterPro"/>
</dbReference>
<dbReference type="GO" id="GO:0046165">
    <property type="term" value="P:alcohol biosynthetic process"/>
    <property type="evidence" value="ECO:0007669"/>
    <property type="project" value="UniProtKB-ARBA"/>
</dbReference>
<dbReference type="GO" id="GO:0043386">
    <property type="term" value="P:mycotoxin biosynthetic process"/>
    <property type="evidence" value="ECO:0007669"/>
    <property type="project" value="UniProtKB-ARBA"/>
</dbReference>
<dbReference type="GO" id="GO:0016114">
    <property type="term" value="P:terpenoid biosynthetic process"/>
    <property type="evidence" value="ECO:0007669"/>
    <property type="project" value="UniProtKB-UniPathway"/>
</dbReference>
<dbReference type="CDD" id="cd00685">
    <property type="entry name" value="Trans_IPPS_HT"/>
    <property type="match status" value="1"/>
</dbReference>
<dbReference type="Gene3D" id="1.10.600.10">
    <property type="entry name" value="Farnesyl Diphosphate Synthase"/>
    <property type="match status" value="2"/>
</dbReference>
<dbReference type="InterPro" id="IPR008949">
    <property type="entry name" value="Isoprenoid_synthase_dom_sf"/>
</dbReference>
<dbReference type="InterPro" id="IPR000092">
    <property type="entry name" value="Polyprenyl_synt"/>
</dbReference>
<dbReference type="InterPro" id="IPR033749">
    <property type="entry name" value="Polyprenyl_synt_CS"/>
</dbReference>
<dbReference type="PANTHER" id="PTHR12001">
    <property type="entry name" value="GERANYLGERANYL PYROPHOSPHATE SYNTHASE"/>
    <property type="match status" value="1"/>
</dbReference>
<dbReference type="PANTHER" id="PTHR12001:SF72">
    <property type="entry name" value="THIJ_PFPI FAMILY PROTEIN (AFU_ORTHOLOGUE AFUA_3G01210)-RELATED"/>
    <property type="match status" value="1"/>
</dbReference>
<dbReference type="Pfam" id="PF00348">
    <property type="entry name" value="polyprenyl_synt"/>
    <property type="match status" value="1"/>
</dbReference>
<dbReference type="Pfam" id="PF19086">
    <property type="entry name" value="Terpene_syn_C_2"/>
    <property type="match status" value="1"/>
</dbReference>
<dbReference type="SFLD" id="SFLDS00005">
    <property type="entry name" value="Isoprenoid_Synthase_Type_I"/>
    <property type="match status" value="1"/>
</dbReference>
<dbReference type="SUPFAM" id="SSF48576">
    <property type="entry name" value="Terpenoid synthases"/>
    <property type="match status" value="2"/>
</dbReference>
<dbReference type="PROSITE" id="PS00723">
    <property type="entry name" value="POLYPRENYL_SYNTHASE_1"/>
    <property type="match status" value="1"/>
</dbReference>
<dbReference type="PROSITE" id="PS00444">
    <property type="entry name" value="POLYPRENYL_SYNTHASE_2"/>
    <property type="match status" value="1"/>
</dbReference>
<keyword id="KW-0414">Isoprene biosynthesis</keyword>
<keyword id="KW-0456">Lyase</keyword>
<keyword id="KW-0460">Magnesium</keyword>
<keyword id="KW-0479">Metal-binding</keyword>
<keyword id="KW-0511">Multifunctional enzyme</keyword>
<keyword id="KW-1185">Reference proteome</keyword>
<keyword id="KW-0677">Repeat</keyword>
<keyword id="KW-0808">Transferase</keyword>
<sequence length="695" mass="79464">MVPTSLSPDDTSDPVPRSSSDIQGFCHNYPLRRHKYEDQANKGSQQCRDDWEQYIGPIERWGCGNPWEGHFAAVVLPFCRPDRIAIISYCFEYAFMYDNVVESAAKSTVNINRDDIALDETEYRTVRSVTGTKQIQSKMLLDLLSIDPVCAEVVIDSWKTMIDTTVKQDKTRTFSNLEEYVDFRIIDTGAPFVDTLMRFGMNILLTPEEEELVAPIVKPCYAALGLANDYFSFDIEWEEFQQPESNQSTMTNAVWLFMQWHQVDEQEAKRRVRQVTNDYEREYQQRVRDFISGEGKSNTKLQLYLTALGYQIPGNIAWSLRCPRYHPWLCEEGSALLRASMDEARDVCNEGKRRSISGDSISSESSVWSGASDRSARSSVSSAPSLDEGKEPDRVMLGTEHLLGPAEYIASLPSKGVREAFIDALNVWLVLPDRFVGVIKSIAKTLHNASLMLDDIEDGSPLRRGQPATHTIFGQALTINSANFVLIQAMDQVRQLEDSRCLDIFVEEMRNLFIGQSFDLYWTRQDECPSEEEYREMIRQKTGGLFRLVARLMMQKATLKKNQHISLEPLVDLMGEYFQIRDDYKNLTEEYTGQKGFCEDLDEGKFSFPLIHAHKLLPEWSEIRLLLQQGRQSGGLDVTQKQLVLGRLHDSGSMAYTEKTLRGLMGEIRLRIDQVEKESGCSNWVLKLLVHRLEV</sequence>
<gene>
    <name evidence="7" type="primary">AbVS</name>
    <name type="ORF">ASPBRDRAFT_675371</name>
</gene>